<evidence type="ECO:0000255" key="1">
    <source>
        <dbReference type="HAMAP-Rule" id="MF_00090"/>
    </source>
</evidence>
<comment type="function">
    <text evidence="1">Catalyzes the methyl esterification of L-isoaspartyl residues in peptides and proteins that result from spontaneous decomposition of normal L-aspartyl and L-asparaginyl residues. It plays a role in the repair and/or degradation of damaged proteins.</text>
</comment>
<comment type="catalytic activity">
    <reaction evidence="1">
        <text>[protein]-L-isoaspartate + S-adenosyl-L-methionine = [protein]-L-isoaspartate alpha-methyl ester + S-adenosyl-L-homocysteine</text>
        <dbReference type="Rhea" id="RHEA:12705"/>
        <dbReference type="Rhea" id="RHEA-COMP:12143"/>
        <dbReference type="Rhea" id="RHEA-COMP:12144"/>
        <dbReference type="ChEBI" id="CHEBI:57856"/>
        <dbReference type="ChEBI" id="CHEBI:59789"/>
        <dbReference type="ChEBI" id="CHEBI:90596"/>
        <dbReference type="ChEBI" id="CHEBI:90598"/>
        <dbReference type="EC" id="2.1.1.77"/>
    </reaction>
</comment>
<comment type="subcellular location">
    <subcellularLocation>
        <location evidence="1">Cytoplasm</location>
    </subcellularLocation>
</comment>
<comment type="similarity">
    <text evidence="1">Belongs to the methyltransferase superfamily. L-isoaspartyl/D-aspartyl protein methyltransferase family.</text>
</comment>
<name>PIMT_SHIB3</name>
<gene>
    <name evidence="1" type="primary">pcm</name>
    <name type="ordered locus">SbBS512_E3131</name>
</gene>
<reference key="1">
    <citation type="submission" date="2008-05" db="EMBL/GenBank/DDBJ databases">
        <title>Complete sequence of Shigella boydii serotype 18 strain BS512.</title>
        <authorList>
            <person name="Rasko D.A."/>
            <person name="Rosovitz M."/>
            <person name="Maurelli A.T."/>
            <person name="Myers G."/>
            <person name="Seshadri R."/>
            <person name="Cer R."/>
            <person name="Jiang L."/>
            <person name="Ravel J."/>
            <person name="Sebastian Y."/>
        </authorList>
    </citation>
    <scope>NUCLEOTIDE SEQUENCE [LARGE SCALE GENOMIC DNA]</scope>
    <source>
        <strain>CDC 3083-94 / BS512</strain>
    </source>
</reference>
<sequence length="208" mass="23258">MVSRRVQALLDQLRAQGIQDEQVLNALAAVPREKFVDEAFEQKAWDNIALPIGQGQTISQPYMVARMTELLELTPQSRVLEIGTGSGYQTAILAHLVQHVCSVERIKGLQWQARRRLKNLDLHNVSTRHGDGWQGWQARAPFDAIIVTAAPPEIPTALMTQLDEGGILVLPVGEEHQYLKRVRRRGGEFIIDTVEAVRFVPLVKGELA</sequence>
<feature type="chain" id="PRO_0000351938" description="Protein-L-isoaspartate O-methyltransferase">
    <location>
        <begin position="1"/>
        <end position="208"/>
    </location>
</feature>
<feature type="active site" evidence="1">
    <location>
        <position position="59"/>
    </location>
</feature>
<protein>
    <recommendedName>
        <fullName evidence="1">Protein-L-isoaspartate O-methyltransferase</fullName>
        <ecNumber evidence="1">2.1.1.77</ecNumber>
    </recommendedName>
    <alternativeName>
        <fullName evidence="1">L-isoaspartyl protein carboxyl methyltransferase</fullName>
    </alternativeName>
    <alternativeName>
        <fullName evidence="1">Protein L-isoaspartyl methyltransferase</fullName>
    </alternativeName>
    <alternativeName>
        <fullName evidence="1">Protein-beta-aspartate methyltransferase</fullName>
        <shortName evidence="1">PIMT</shortName>
    </alternativeName>
</protein>
<organism>
    <name type="scientific">Shigella boydii serotype 18 (strain CDC 3083-94 / BS512)</name>
    <dbReference type="NCBI Taxonomy" id="344609"/>
    <lineage>
        <taxon>Bacteria</taxon>
        <taxon>Pseudomonadati</taxon>
        <taxon>Pseudomonadota</taxon>
        <taxon>Gammaproteobacteria</taxon>
        <taxon>Enterobacterales</taxon>
        <taxon>Enterobacteriaceae</taxon>
        <taxon>Shigella</taxon>
    </lineage>
</organism>
<accession>B2TZI8</accession>
<proteinExistence type="inferred from homology"/>
<dbReference type="EC" id="2.1.1.77" evidence="1"/>
<dbReference type="EMBL" id="CP001063">
    <property type="protein sequence ID" value="ACD09451.1"/>
    <property type="molecule type" value="Genomic_DNA"/>
</dbReference>
<dbReference type="RefSeq" id="WP_000254708.1">
    <property type="nucleotide sequence ID" value="NC_010658.1"/>
</dbReference>
<dbReference type="SMR" id="B2TZI8"/>
<dbReference type="STRING" id="344609.SbBS512_E3131"/>
<dbReference type="GeneID" id="93779263"/>
<dbReference type="KEGG" id="sbc:SbBS512_E3131"/>
<dbReference type="HOGENOM" id="CLU_055432_2_0_6"/>
<dbReference type="Proteomes" id="UP000001030">
    <property type="component" value="Chromosome"/>
</dbReference>
<dbReference type="GO" id="GO:0005737">
    <property type="term" value="C:cytoplasm"/>
    <property type="evidence" value="ECO:0007669"/>
    <property type="project" value="UniProtKB-SubCell"/>
</dbReference>
<dbReference type="GO" id="GO:0004719">
    <property type="term" value="F:protein-L-isoaspartate (D-aspartate) O-methyltransferase activity"/>
    <property type="evidence" value="ECO:0007669"/>
    <property type="project" value="UniProtKB-UniRule"/>
</dbReference>
<dbReference type="GO" id="GO:0032259">
    <property type="term" value="P:methylation"/>
    <property type="evidence" value="ECO:0007669"/>
    <property type="project" value="UniProtKB-KW"/>
</dbReference>
<dbReference type="GO" id="GO:0036211">
    <property type="term" value="P:protein modification process"/>
    <property type="evidence" value="ECO:0007669"/>
    <property type="project" value="UniProtKB-UniRule"/>
</dbReference>
<dbReference type="GO" id="GO:0030091">
    <property type="term" value="P:protein repair"/>
    <property type="evidence" value="ECO:0007669"/>
    <property type="project" value="UniProtKB-UniRule"/>
</dbReference>
<dbReference type="CDD" id="cd02440">
    <property type="entry name" value="AdoMet_MTases"/>
    <property type="match status" value="1"/>
</dbReference>
<dbReference type="FunFam" id="3.40.50.150:FF:000010">
    <property type="entry name" value="Protein-L-isoaspartate O-methyltransferase"/>
    <property type="match status" value="1"/>
</dbReference>
<dbReference type="Gene3D" id="3.40.50.150">
    <property type="entry name" value="Vaccinia Virus protein VP39"/>
    <property type="match status" value="1"/>
</dbReference>
<dbReference type="HAMAP" id="MF_00090">
    <property type="entry name" value="PIMT"/>
    <property type="match status" value="1"/>
</dbReference>
<dbReference type="InterPro" id="IPR000682">
    <property type="entry name" value="PCMT"/>
</dbReference>
<dbReference type="InterPro" id="IPR029063">
    <property type="entry name" value="SAM-dependent_MTases_sf"/>
</dbReference>
<dbReference type="NCBIfam" id="TIGR00080">
    <property type="entry name" value="pimt"/>
    <property type="match status" value="1"/>
</dbReference>
<dbReference type="NCBIfam" id="NF001453">
    <property type="entry name" value="PRK00312.1"/>
    <property type="match status" value="1"/>
</dbReference>
<dbReference type="PANTHER" id="PTHR11579">
    <property type="entry name" value="PROTEIN-L-ISOASPARTATE O-METHYLTRANSFERASE"/>
    <property type="match status" value="1"/>
</dbReference>
<dbReference type="PANTHER" id="PTHR11579:SF0">
    <property type="entry name" value="PROTEIN-L-ISOASPARTATE(D-ASPARTATE) O-METHYLTRANSFERASE"/>
    <property type="match status" value="1"/>
</dbReference>
<dbReference type="Pfam" id="PF01135">
    <property type="entry name" value="PCMT"/>
    <property type="match status" value="1"/>
</dbReference>
<dbReference type="SUPFAM" id="SSF53335">
    <property type="entry name" value="S-adenosyl-L-methionine-dependent methyltransferases"/>
    <property type="match status" value="1"/>
</dbReference>
<dbReference type="PROSITE" id="PS01279">
    <property type="entry name" value="PCMT"/>
    <property type="match status" value="1"/>
</dbReference>
<keyword id="KW-0963">Cytoplasm</keyword>
<keyword id="KW-0489">Methyltransferase</keyword>
<keyword id="KW-1185">Reference proteome</keyword>
<keyword id="KW-0949">S-adenosyl-L-methionine</keyword>
<keyword id="KW-0808">Transferase</keyword>